<comment type="function">
    <text>Produces ATP from ADP in the presence of a proton gradient across the membrane. The alpha chain is a regulatory subunit.</text>
</comment>
<comment type="catalytic activity">
    <reaction evidence="1">
        <text>ATP + H2O + 4 H(+)(in) = ADP + phosphate + 5 H(+)(out)</text>
        <dbReference type="Rhea" id="RHEA:57720"/>
        <dbReference type="ChEBI" id="CHEBI:15377"/>
        <dbReference type="ChEBI" id="CHEBI:15378"/>
        <dbReference type="ChEBI" id="CHEBI:30616"/>
        <dbReference type="ChEBI" id="CHEBI:43474"/>
        <dbReference type="ChEBI" id="CHEBI:456216"/>
        <dbReference type="EC" id="7.1.2.2"/>
    </reaction>
</comment>
<comment type="subunit">
    <text evidence="1">F-type ATPases have 2 components, CF(1) - the catalytic core - and CF(0) - the membrane proton channel. CF(1) has five subunits: alpha(3), beta(3), gamma(1), delta(1), epsilon(1). CF(0) has four main subunits: a, b, b' and c.</text>
</comment>
<comment type="subcellular location">
    <subcellularLocation>
        <location evidence="1">Plastid</location>
        <location evidence="1">Chloroplast thylakoid membrane</location>
        <topology evidence="1">Peripheral membrane protein</topology>
    </subcellularLocation>
</comment>
<comment type="similarity">
    <text evidence="1">Belongs to the ATPase alpha/beta chains family.</text>
</comment>
<dbReference type="EC" id="7.1.2.2" evidence="1"/>
<dbReference type="EMBL" id="X63382">
    <property type="protein sequence ID" value="CAA44984.1"/>
    <property type="molecule type" value="Genomic_DNA"/>
</dbReference>
<dbReference type="PIR" id="S26962">
    <property type="entry name" value="S26962"/>
</dbReference>
<dbReference type="SMR" id="Q02848"/>
<dbReference type="GO" id="GO:0009535">
    <property type="term" value="C:chloroplast thylakoid membrane"/>
    <property type="evidence" value="ECO:0007669"/>
    <property type="project" value="UniProtKB-SubCell"/>
</dbReference>
<dbReference type="GO" id="GO:0045259">
    <property type="term" value="C:proton-transporting ATP synthase complex"/>
    <property type="evidence" value="ECO:0007669"/>
    <property type="project" value="UniProtKB-KW"/>
</dbReference>
<dbReference type="GO" id="GO:0043531">
    <property type="term" value="F:ADP binding"/>
    <property type="evidence" value="ECO:0007669"/>
    <property type="project" value="TreeGrafter"/>
</dbReference>
<dbReference type="GO" id="GO:0005524">
    <property type="term" value="F:ATP binding"/>
    <property type="evidence" value="ECO:0007669"/>
    <property type="project" value="UniProtKB-UniRule"/>
</dbReference>
<dbReference type="GO" id="GO:0046933">
    <property type="term" value="F:proton-transporting ATP synthase activity, rotational mechanism"/>
    <property type="evidence" value="ECO:0007669"/>
    <property type="project" value="UniProtKB-UniRule"/>
</dbReference>
<dbReference type="CDD" id="cd18113">
    <property type="entry name" value="ATP-synt_F1_alpha_C"/>
    <property type="match status" value="1"/>
</dbReference>
<dbReference type="CDD" id="cd18116">
    <property type="entry name" value="ATP-synt_F1_alpha_N"/>
    <property type="match status" value="1"/>
</dbReference>
<dbReference type="CDD" id="cd01132">
    <property type="entry name" value="F1-ATPase_alpha_CD"/>
    <property type="match status" value="1"/>
</dbReference>
<dbReference type="FunFam" id="1.20.150.20:FF:000001">
    <property type="entry name" value="ATP synthase subunit alpha"/>
    <property type="match status" value="1"/>
</dbReference>
<dbReference type="FunFam" id="2.40.30.20:FF:000001">
    <property type="entry name" value="ATP synthase subunit alpha"/>
    <property type="match status" value="1"/>
</dbReference>
<dbReference type="FunFam" id="3.40.50.300:FF:000002">
    <property type="entry name" value="ATP synthase subunit alpha"/>
    <property type="match status" value="1"/>
</dbReference>
<dbReference type="Gene3D" id="2.40.30.20">
    <property type="match status" value="1"/>
</dbReference>
<dbReference type="Gene3D" id="1.20.150.20">
    <property type="entry name" value="ATP synthase alpha/beta chain, C-terminal domain"/>
    <property type="match status" value="1"/>
</dbReference>
<dbReference type="Gene3D" id="3.40.50.300">
    <property type="entry name" value="P-loop containing nucleotide triphosphate hydrolases"/>
    <property type="match status" value="1"/>
</dbReference>
<dbReference type="HAMAP" id="MF_01346">
    <property type="entry name" value="ATP_synth_alpha_bact"/>
    <property type="match status" value="1"/>
</dbReference>
<dbReference type="InterPro" id="IPR023366">
    <property type="entry name" value="ATP_synth_asu-like_sf"/>
</dbReference>
<dbReference type="InterPro" id="IPR000793">
    <property type="entry name" value="ATP_synth_asu_C"/>
</dbReference>
<dbReference type="InterPro" id="IPR038376">
    <property type="entry name" value="ATP_synth_asu_C_sf"/>
</dbReference>
<dbReference type="InterPro" id="IPR033732">
    <property type="entry name" value="ATP_synth_F1_a_nt-bd_dom"/>
</dbReference>
<dbReference type="InterPro" id="IPR005294">
    <property type="entry name" value="ATP_synth_F1_asu"/>
</dbReference>
<dbReference type="InterPro" id="IPR020003">
    <property type="entry name" value="ATPase_a/bsu_AS"/>
</dbReference>
<dbReference type="InterPro" id="IPR004100">
    <property type="entry name" value="ATPase_F1/V1/A1_a/bsu_N"/>
</dbReference>
<dbReference type="InterPro" id="IPR036121">
    <property type="entry name" value="ATPase_F1/V1/A1_a/bsu_N_sf"/>
</dbReference>
<dbReference type="InterPro" id="IPR000194">
    <property type="entry name" value="ATPase_F1/V1/A1_a/bsu_nucl-bd"/>
</dbReference>
<dbReference type="InterPro" id="IPR027417">
    <property type="entry name" value="P-loop_NTPase"/>
</dbReference>
<dbReference type="NCBIfam" id="TIGR00962">
    <property type="entry name" value="atpA"/>
    <property type="match status" value="1"/>
</dbReference>
<dbReference type="NCBIfam" id="NF009884">
    <property type="entry name" value="PRK13343.1"/>
    <property type="match status" value="1"/>
</dbReference>
<dbReference type="PANTHER" id="PTHR48082">
    <property type="entry name" value="ATP SYNTHASE SUBUNIT ALPHA, MITOCHONDRIAL"/>
    <property type="match status" value="1"/>
</dbReference>
<dbReference type="PANTHER" id="PTHR48082:SF2">
    <property type="entry name" value="ATP SYNTHASE SUBUNIT ALPHA, MITOCHONDRIAL"/>
    <property type="match status" value="1"/>
</dbReference>
<dbReference type="Pfam" id="PF00006">
    <property type="entry name" value="ATP-synt_ab"/>
    <property type="match status" value="1"/>
</dbReference>
<dbReference type="Pfam" id="PF00306">
    <property type="entry name" value="ATP-synt_ab_C"/>
    <property type="match status" value="1"/>
</dbReference>
<dbReference type="Pfam" id="PF02874">
    <property type="entry name" value="ATP-synt_ab_N"/>
    <property type="match status" value="1"/>
</dbReference>
<dbReference type="PIRSF" id="PIRSF039088">
    <property type="entry name" value="F_ATPase_subunit_alpha"/>
    <property type="match status" value="1"/>
</dbReference>
<dbReference type="SUPFAM" id="SSF47917">
    <property type="entry name" value="C-terminal domain of alpha and beta subunits of F1 ATP synthase"/>
    <property type="match status" value="1"/>
</dbReference>
<dbReference type="SUPFAM" id="SSF50615">
    <property type="entry name" value="N-terminal domain of alpha and beta subunits of F1 ATP synthase"/>
    <property type="match status" value="1"/>
</dbReference>
<dbReference type="SUPFAM" id="SSF52540">
    <property type="entry name" value="P-loop containing nucleoside triphosphate hydrolases"/>
    <property type="match status" value="1"/>
</dbReference>
<dbReference type="PROSITE" id="PS00152">
    <property type="entry name" value="ATPASE_ALPHA_BETA"/>
    <property type="match status" value="1"/>
</dbReference>
<accession>Q02848</accession>
<feature type="chain" id="PRO_0000144369" description="ATP synthase subunit alpha, chloroplastic">
    <location>
        <begin position="1"/>
        <end position="505"/>
    </location>
</feature>
<feature type="binding site" evidence="1">
    <location>
        <begin position="172"/>
        <end position="179"/>
    </location>
    <ligand>
        <name>ATP</name>
        <dbReference type="ChEBI" id="CHEBI:30616"/>
    </ligand>
</feature>
<feature type="site" description="Required for activity" evidence="1">
    <location>
        <position position="365"/>
    </location>
</feature>
<reference key="1">
    <citation type="journal article" date="1992" name="J. Mol. Biol.">
        <title>Large ATP synthase operon of the red alga Antithamnion sp. resembles the corresponding operon in cyanobacteria.</title>
        <authorList>
            <person name="Kostrzewa M."/>
            <person name="Zetsche K."/>
        </authorList>
    </citation>
    <scope>NUCLEOTIDE SEQUENCE [GENOMIC DNA]</scope>
    <source>
        <strain>LB 95.79</strain>
    </source>
</reference>
<evidence type="ECO:0000255" key="1">
    <source>
        <dbReference type="HAMAP-Rule" id="MF_01346"/>
    </source>
</evidence>
<organism>
    <name type="scientific">Antithamnion sp.</name>
    <name type="common">Red alga</name>
    <dbReference type="NCBI Taxonomy" id="2767"/>
    <lineage>
        <taxon>Eukaryota</taxon>
        <taxon>Rhodophyta</taxon>
        <taxon>Florideophyceae</taxon>
        <taxon>Rhodymeniophycidae</taxon>
        <taxon>Ceramiales</taxon>
        <taxon>Ceramiaceae</taxon>
        <taxon>Antithamnion</taxon>
    </lineage>
</organism>
<sequence>MVNIRPDEISNIIRQQIDNYDQEVQVANIGTVLQVGDGIARVYGLDEVMAGELLQFEDKEQTVGIALNLESDNVGVVLMGDGRNILEGSSVKSTGKIAQIPVGDEFLGRVVNPLAKPIDAKGTPSVQDTRLIESYAPGIIGRQSVCEPLQTGITAIDSMIPIGRGQRELIIGDRQTGKTTVALDTIINQKGQDVVCVYVAIGQKASSVAQVVSTLEEKGALEYTIVVAANADEPATLQYIAPYTGAALAEYFMYKGKATLVIYDDLTKQAQAYRQMSLLLRRPPGREAYPGDVFYLHSRLLERAAKLNQDLGGGSMTALPIIETQAGDVSAYIPTNVISITDGQIFLSGDLFNSGIRPAINVGISVSRVGSAAQIKAMKQVAGKLKLELAQFAELEAFSQFASDLDKATQNQLARGQRLREILKQAQNSPIPVEEQTAIIYAGINGYLDEVELSQVKDFVLALREDLRNSKPEFGESILSTKKLNPDSEEILKKAISDVAQAFSL</sequence>
<name>ATPA_ANTSP</name>
<gene>
    <name evidence="1" type="primary">atpA</name>
</gene>
<geneLocation type="chloroplast"/>
<protein>
    <recommendedName>
        <fullName evidence="1">ATP synthase subunit alpha, chloroplastic</fullName>
        <ecNumber evidence="1">7.1.2.2</ecNumber>
    </recommendedName>
    <alternativeName>
        <fullName evidence="1">ATP synthase F1 sector subunit alpha</fullName>
    </alternativeName>
    <alternativeName>
        <fullName evidence="1">F-ATPase subunit alpha</fullName>
    </alternativeName>
</protein>
<keyword id="KW-0066">ATP synthesis</keyword>
<keyword id="KW-0067">ATP-binding</keyword>
<keyword id="KW-0139">CF(1)</keyword>
<keyword id="KW-0150">Chloroplast</keyword>
<keyword id="KW-0375">Hydrogen ion transport</keyword>
<keyword id="KW-0406">Ion transport</keyword>
<keyword id="KW-0472">Membrane</keyword>
<keyword id="KW-0547">Nucleotide-binding</keyword>
<keyword id="KW-0934">Plastid</keyword>
<keyword id="KW-0793">Thylakoid</keyword>
<keyword id="KW-1278">Translocase</keyword>
<keyword id="KW-0813">Transport</keyword>
<proteinExistence type="inferred from homology"/>